<evidence type="ECO:0000250" key="1">
    <source>
        <dbReference type="UniProtKB" id="P0ADW3"/>
    </source>
</evidence>
<evidence type="ECO:0000255" key="2"/>
<evidence type="ECO:0000256" key="3">
    <source>
        <dbReference type="SAM" id="MobiDB-lite"/>
    </source>
</evidence>
<evidence type="ECO:0000269" key="4">
    <source>
    </source>
</evidence>
<evidence type="ECO:0000303" key="5">
    <source>
    </source>
</evidence>
<evidence type="ECO:0000305" key="6"/>
<evidence type="ECO:0000312" key="7">
    <source>
        <dbReference type="EMBL" id="AAP96293.1"/>
    </source>
</evidence>
<evidence type="ECO:0007744" key="8">
    <source>
        <dbReference type="PDB" id="6UN9"/>
    </source>
</evidence>
<evidence type="ECO:0007829" key="9">
    <source>
        <dbReference type="PDB" id="6UN9"/>
    </source>
</evidence>
<reference key="1">
    <citation type="submission" date="2003-06" db="EMBL/GenBank/DDBJ databases">
        <title>The complete genome sequence of Haemophilus ducreyi.</title>
        <authorList>
            <person name="Munson R.S. Jr."/>
            <person name="Ray W.C."/>
            <person name="Mahairas G."/>
            <person name="Sabo P."/>
            <person name="Mungur R."/>
            <person name="Johnson L."/>
            <person name="Nguyen D."/>
            <person name="Wang J."/>
            <person name="Forst C."/>
            <person name="Hood L."/>
        </authorList>
    </citation>
    <scope>NUCLEOTIDE SEQUENCE [LARGE SCALE GENOMIC DNA]</scope>
    <source>
        <strain>35000HP / ATCC 700724</strain>
    </source>
</reference>
<reference evidence="8" key="2">
    <citation type="journal article" date="2021" name="J. Biol. Chem.">
        <title>ZapG (YhcB/DUF1043), a novel cell division protein in gamma-proteobacteria linking the Z-ring to septal peptidoglycan synthesis.</title>
        <authorList>
            <person name="Mehla J."/>
            <person name="Liechti G."/>
            <person name="Morgenstein R.M."/>
            <person name="Caufield J.H."/>
            <person name="Hosseinnia A."/>
            <person name="Gagarinova A."/>
            <person name="Phanse S."/>
            <person name="Goodacre N."/>
            <person name="Brockett M."/>
            <person name="Sakhawalkar N."/>
            <person name="Babu M."/>
            <person name="Xiao R."/>
            <person name="Montelione G.T."/>
            <person name="Vorobiev S."/>
            <person name="den Blaauwen T."/>
            <person name="Hunt J.F."/>
            <person name="Uetz P."/>
        </authorList>
    </citation>
    <scope>X-RAY CRYSTALLOGRAPHY (2.80 ANGSTROMS) OF 31-128</scope>
    <scope>SUBUNIT</scope>
    <scope>DOMAIN</scope>
</reference>
<proteinExistence type="evidence at protein level"/>
<comment type="function">
    <text evidence="1">Involved in cell division, cell envelope biogenesis and cell shape maintenance.</text>
</comment>
<comment type="subunit">
    <text evidence="4">Homotetramer (PubMed:33895137). In solution, is primarily monomeric but forms small amounts of stable tetramer and hexadecamer (PubMed:33895137). The crystal structure of the cytosolic region shows a coiled-coil tetramer in the asymmetric unit that is very likely to be a physiologically relevant assembly of the protein (PubMed:33895137).</text>
</comment>
<comment type="subcellular location">
    <subcellularLocation>
        <location evidence="1">Cell inner membrane</location>
        <topology evidence="2">Single-pass membrane protein</topology>
    </subcellularLocation>
</comment>
<comment type="domain">
    <text evidence="4">The tetrameric alpha-helical coiled-coil structure is likely to be involved in linking the Z-ring to the septal peptidoglycan-synthesizing complexes.</text>
</comment>
<comment type="similarity">
    <text evidence="6">Belongs to the ZapG family.</text>
</comment>
<dbReference type="EMBL" id="AE017143">
    <property type="protein sequence ID" value="AAP96293.1"/>
    <property type="molecule type" value="Genomic_DNA"/>
</dbReference>
<dbReference type="RefSeq" id="WP_010945338.1">
    <property type="nucleotide sequence ID" value="NC_002940.2"/>
</dbReference>
<dbReference type="PDB" id="6UN9">
    <property type="method" value="X-ray"/>
    <property type="resolution" value="2.80 A"/>
    <property type="chains" value="A/B/C/D=31-128"/>
</dbReference>
<dbReference type="PDBsum" id="6UN9"/>
<dbReference type="SMR" id="Q7VLF5"/>
<dbReference type="STRING" id="233412.HD_1495"/>
<dbReference type="KEGG" id="hdu:HD_1495"/>
<dbReference type="eggNOG" id="COG3105">
    <property type="taxonomic scope" value="Bacteria"/>
</dbReference>
<dbReference type="HOGENOM" id="CLU_135606_0_0_6"/>
<dbReference type="OrthoDB" id="6401511at2"/>
<dbReference type="Proteomes" id="UP000001022">
    <property type="component" value="Chromosome"/>
</dbReference>
<dbReference type="GO" id="GO:0005886">
    <property type="term" value="C:plasma membrane"/>
    <property type="evidence" value="ECO:0007669"/>
    <property type="project" value="UniProtKB-SubCell"/>
</dbReference>
<dbReference type="GO" id="GO:0051301">
    <property type="term" value="P:cell division"/>
    <property type="evidence" value="ECO:0007669"/>
    <property type="project" value="UniProtKB-KW"/>
</dbReference>
<dbReference type="GO" id="GO:0008360">
    <property type="term" value="P:regulation of cell shape"/>
    <property type="evidence" value="ECO:0007669"/>
    <property type="project" value="UniProtKB-KW"/>
</dbReference>
<dbReference type="InterPro" id="IPR009386">
    <property type="entry name" value="ZapG-like"/>
</dbReference>
<dbReference type="PANTHER" id="PTHR39579">
    <property type="entry name" value="INNER MEMBRANE PROTEIN YHCB"/>
    <property type="match status" value="1"/>
</dbReference>
<dbReference type="PANTHER" id="PTHR39579:SF1">
    <property type="entry name" value="INNER MEMBRANE PROTEIN YHCB"/>
    <property type="match status" value="1"/>
</dbReference>
<dbReference type="Pfam" id="PF01724">
    <property type="entry name" value="DUF29"/>
    <property type="match status" value="1"/>
</dbReference>
<dbReference type="Pfam" id="PF06295">
    <property type="entry name" value="ZapG-like"/>
    <property type="match status" value="1"/>
</dbReference>
<dbReference type="PIRSF" id="PIRSF006318">
    <property type="entry name" value="YhcB"/>
    <property type="match status" value="1"/>
</dbReference>
<organism>
    <name type="scientific">Haemophilus ducreyi (strain 35000HP / ATCC 700724)</name>
    <dbReference type="NCBI Taxonomy" id="233412"/>
    <lineage>
        <taxon>Bacteria</taxon>
        <taxon>Pseudomonadati</taxon>
        <taxon>Pseudomonadota</taxon>
        <taxon>Gammaproteobacteria</taxon>
        <taxon>Pasteurellales</taxon>
        <taxon>Pasteurellaceae</taxon>
        <taxon>Haemophilus</taxon>
    </lineage>
</organism>
<gene>
    <name evidence="5" type="primary">zapG</name>
    <name evidence="7" type="ordered locus">HD_1495</name>
</gene>
<sequence>MEQWTTEIWFSISIAFLIGTLCGVLVMRFFKGNIQQQIQLKSELASAEAKIEEQKQQLERHFEQSANLLENLAEDYKKLYTHFAQNSEQLLPESNQVEFFKRLKNHANGDEDNQPRDYSDGSSGLLKS</sequence>
<protein>
    <recommendedName>
        <fullName evidence="5">Z-ring associated protein G</fullName>
    </recommendedName>
    <alternativeName>
        <fullName evidence="6">Cell division protein ZapG</fullName>
    </alternativeName>
</protein>
<accession>Q7VLF5</accession>
<name>ZAPG_HAEDU</name>
<feature type="chain" id="PRO_0000458664" description="Z-ring associated protein G">
    <location>
        <begin position="1"/>
        <end position="128"/>
    </location>
</feature>
<feature type="transmembrane region" description="Helical" evidence="2">
    <location>
        <begin position="7"/>
        <end position="27"/>
    </location>
</feature>
<feature type="region of interest" description="Disordered" evidence="3">
    <location>
        <begin position="105"/>
        <end position="128"/>
    </location>
</feature>
<feature type="coiled-coil region" evidence="2">
    <location>
        <begin position="37"/>
        <end position="75"/>
    </location>
</feature>
<feature type="compositionally biased region" description="Basic and acidic residues" evidence="3">
    <location>
        <begin position="107"/>
        <end position="119"/>
    </location>
</feature>
<feature type="helix" evidence="9">
    <location>
        <begin position="35"/>
        <end position="56"/>
    </location>
</feature>
<feature type="turn" evidence="9">
    <location>
        <begin position="57"/>
        <end position="60"/>
    </location>
</feature>
<feature type="helix" evidence="9">
    <location>
        <begin position="61"/>
        <end position="88"/>
    </location>
</feature>
<feature type="strand" evidence="9">
    <location>
        <begin position="92"/>
        <end position="94"/>
    </location>
</feature>
<keyword id="KW-0002">3D-structure</keyword>
<keyword id="KW-0131">Cell cycle</keyword>
<keyword id="KW-0132">Cell division</keyword>
<keyword id="KW-0997">Cell inner membrane</keyword>
<keyword id="KW-1003">Cell membrane</keyword>
<keyword id="KW-0133">Cell shape</keyword>
<keyword id="KW-0175">Coiled coil</keyword>
<keyword id="KW-0472">Membrane</keyword>
<keyword id="KW-1185">Reference proteome</keyword>
<keyword id="KW-0812">Transmembrane</keyword>
<keyword id="KW-1133">Transmembrane helix</keyword>